<sequence>MNEQQRLASRQANSSTKKEEKDYSKYFESVYQPPSLKLAKKRGKEEVKIERDFGLPEEFRDFGAGRKFYIRTYGCQMNEHDTEVMAGIFTTLGYEPTFSTEEADVILLNTCAIRENAENKVFGELGHLKSLKRRNPDLIIGVCGCMSQEESVVNKIMQKNQHVDMVFGTHNIHRLPYILKDAMFSKETVVEVWSKEGDVIENLPKVRRGDIKAWVNIMYGCDKFCTYCIVPYTRGKERSRRPEDIIKEIRHLAANGYKEITLLGQNVNAYGKDFEDIQYGLGDLMDELRKIDIARIRFTTSHPRDFDDHLIDVLGKGGNLVEHIHLPVQSGSTDMLKIMARKYSREHYLELVRKIKETIPNAVLTTDIIVGFPNETDEQFEETMSLYREVGFDTAFTFIYSPREGTPAAKMQDNVPMEVKKERLQRLNTLVNEYGVNKNKRYIGQIVEVLVEGESKNNPEVLAGYTRTNKLVNFVASKSLIGQLVKVKITEAKTWSLNGELVKEPIEVK</sequence>
<gene>
    <name evidence="1" type="primary">miaB</name>
    <name type="ordered locus">BcerKBAB4_3543</name>
</gene>
<protein>
    <recommendedName>
        <fullName evidence="1">tRNA-2-methylthio-N(6)-dimethylallyladenosine synthase</fullName>
        <ecNumber evidence="1">2.8.4.3</ecNumber>
    </recommendedName>
    <alternativeName>
        <fullName evidence="1">(Dimethylallyl)adenosine tRNA methylthiotransferase MiaB</fullName>
    </alternativeName>
    <alternativeName>
        <fullName evidence="1">tRNA-i(6)A37 methylthiotransferase</fullName>
    </alternativeName>
</protein>
<comment type="function">
    <text evidence="1">Catalyzes the methylthiolation of N6-(dimethylallyl)adenosine (i(6)A), leading to the formation of 2-methylthio-N6-(dimethylallyl)adenosine (ms(2)i(6)A) at position 37 in tRNAs that read codons beginning with uridine.</text>
</comment>
<comment type="catalytic activity">
    <reaction evidence="1">
        <text>N(6)-dimethylallyladenosine(37) in tRNA + (sulfur carrier)-SH + AH2 + 2 S-adenosyl-L-methionine = 2-methylsulfanyl-N(6)-dimethylallyladenosine(37) in tRNA + (sulfur carrier)-H + 5'-deoxyadenosine + L-methionine + A + S-adenosyl-L-homocysteine + 2 H(+)</text>
        <dbReference type="Rhea" id="RHEA:37067"/>
        <dbReference type="Rhea" id="RHEA-COMP:10375"/>
        <dbReference type="Rhea" id="RHEA-COMP:10376"/>
        <dbReference type="Rhea" id="RHEA-COMP:14737"/>
        <dbReference type="Rhea" id="RHEA-COMP:14739"/>
        <dbReference type="ChEBI" id="CHEBI:13193"/>
        <dbReference type="ChEBI" id="CHEBI:15378"/>
        <dbReference type="ChEBI" id="CHEBI:17319"/>
        <dbReference type="ChEBI" id="CHEBI:17499"/>
        <dbReference type="ChEBI" id="CHEBI:29917"/>
        <dbReference type="ChEBI" id="CHEBI:57844"/>
        <dbReference type="ChEBI" id="CHEBI:57856"/>
        <dbReference type="ChEBI" id="CHEBI:59789"/>
        <dbReference type="ChEBI" id="CHEBI:64428"/>
        <dbReference type="ChEBI" id="CHEBI:74415"/>
        <dbReference type="ChEBI" id="CHEBI:74417"/>
        <dbReference type="EC" id="2.8.4.3"/>
    </reaction>
</comment>
<comment type="cofactor">
    <cofactor evidence="1">
        <name>[4Fe-4S] cluster</name>
        <dbReference type="ChEBI" id="CHEBI:49883"/>
    </cofactor>
    <text evidence="1">Binds 2 [4Fe-4S] clusters. One cluster is coordinated with 3 cysteines and an exchangeable S-adenosyl-L-methionine.</text>
</comment>
<comment type="subunit">
    <text evidence="1">Monomer.</text>
</comment>
<comment type="subcellular location">
    <subcellularLocation>
        <location evidence="1">Cytoplasm</location>
    </subcellularLocation>
</comment>
<comment type="similarity">
    <text evidence="1">Belongs to the methylthiotransferase family. MiaB subfamily.</text>
</comment>
<evidence type="ECO:0000255" key="1">
    <source>
        <dbReference type="HAMAP-Rule" id="MF_01864"/>
    </source>
</evidence>
<evidence type="ECO:0000255" key="2">
    <source>
        <dbReference type="PROSITE-ProRule" id="PRU01266"/>
    </source>
</evidence>
<evidence type="ECO:0000256" key="3">
    <source>
        <dbReference type="SAM" id="MobiDB-lite"/>
    </source>
</evidence>
<proteinExistence type="inferred from homology"/>
<dbReference type="EC" id="2.8.4.3" evidence="1"/>
<dbReference type="EMBL" id="CP000903">
    <property type="protein sequence ID" value="ABY44716.1"/>
    <property type="molecule type" value="Genomic_DNA"/>
</dbReference>
<dbReference type="RefSeq" id="WP_012261533.1">
    <property type="nucleotide sequence ID" value="NC_010184.1"/>
</dbReference>
<dbReference type="SMR" id="A9VS16"/>
<dbReference type="KEGG" id="bwe:BcerKBAB4_3543"/>
<dbReference type="eggNOG" id="COG0621">
    <property type="taxonomic scope" value="Bacteria"/>
</dbReference>
<dbReference type="HOGENOM" id="CLU_018697_2_0_9"/>
<dbReference type="Proteomes" id="UP000002154">
    <property type="component" value="Chromosome"/>
</dbReference>
<dbReference type="GO" id="GO:0005829">
    <property type="term" value="C:cytosol"/>
    <property type="evidence" value="ECO:0007669"/>
    <property type="project" value="TreeGrafter"/>
</dbReference>
<dbReference type="GO" id="GO:0051539">
    <property type="term" value="F:4 iron, 4 sulfur cluster binding"/>
    <property type="evidence" value="ECO:0007669"/>
    <property type="project" value="UniProtKB-UniRule"/>
</dbReference>
<dbReference type="GO" id="GO:0046872">
    <property type="term" value="F:metal ion binding"/>
    <property type="evidence" value="ECO:0007669"/>
    <property type="project" value="UniProtKB-KW"/>
</dbReference>
<dbReference type="GO" id="GO:0035597">
    <property type="term" value="F:N6-isopentenyladenosine methylthiotransferase activity"/>
    <property type="evidence" value="ECO:0007669"/>
    <property type="project" value="TreeGrafter"/>
</dbReference>
<dbReference type="CDD" id="cd01335">
    <property type="entry name" value="Radical_SAM"/>
    <property type="match status" value="1"/>
</dbReference>
<dbReference type="FunFam" id="3.40.50.12160:FF:000006">
    <property type="entry name" value="tRNA-2-methylthio-N(6)-dimethylallyladenosine synthase"/>
    <property type="match status" value="1"/>
</dbReference>
<dbReference type="FunFam" id="3.80.30.20:FF:000001">
    <property type="entry name" value="tRNA-2-methylthio-N(6)-dimethylallyladenosine synthase 2"/>
    <property type="match status" value="1"/>
</dbReference>
<dbReference type="Gene3D" id="3.40.50.12160">
    <property type="entry name" value="Methylthiotransferase, N-terminal domain"/>
    <property type="match status" value="1"/>
</dbReference>
<dbReference type="Gene3D" id="3.80.30.20">
    <property type="entry name" value="tm_1862 like domain"/>
    <property type="match status" value="1"/>
</dbReference>
<dbReference type="HAMAP" id="MF_01864">
    <property type="entry name" value="tRNA_metthiotr_MiaB"/>
    <property type="match status" value="1"/>
</dbReference>
<dbReference type="InterPro" id="IPR006638">
    <property type="entry name" value="Elp3/MiaA/NifB-like_rSAM"/>
</dbReference>
<dbReference type="InterPro" id="IPR005839">
    <property type="entry name" value="Methylthiotransferase"/>
</dbReference>
<dbReference type="InterPro" id="IPR020612">
    <property type="entry name" value="Methylthiotransferase_CS"/>
</dbReference>
<dbReference type="InterPro" id="IPR013848">
    <property type="entry name" value="Methylthiotransferase_N"/>
</dbReference>
<dbReference type="InterPro" id="IPR038135">
    <property type="entry name" value="Methylthiotransferase_N_sf"/>
</dbReference>
<dbReference type="InterPro" id="IPR006463">
    <property type="entry name" value="MiaB_methiolase"/>
</dbReference>
<dbReference type="InterPro" id="IPR007197">
    <property type="entry name" value="rSAM"/>
</dbReference>
<dbReference type="InterPro" id="IPR023404">
    <property type="entry name" value="rSAM_horseshoe"/>
</dbReference>
<dbReference type="InterPro" id="IPR002792">
    <property type="entry name" value="TRAM_dom"/>
</dbReference>
<dbReference type="NCBIfam" id="TIGR01574">
    <property type="entry name" value="miaB-methiolase"/>
    <property type="match status" value="1"/>
</dbReference>
<dbReference type="NCBIfam" id="TIGR00089">
    <property type="entry name" value="MiaB/RimO family radical SAM methylthiotransferase"/>
    <property type="match status" value="1"/>
</dbReference>
<dbReference type="PANTHER" id="PTHR43020">
    <property type="entry name" value="CDK5 REGULATORY SUBUNIT-ASSOCIATED PROTEIN 1"/>
    <property type="match status" value="1"/>
</dbReference>
<dbReference type="PANTHER" id="PTHR43020:SF2">
    <property type="entry name" value="MITOCHONDRIAL TRNA METHYLTHIOTRANSFERASE CDK5RAP1"/>
    <property type="match status" value="1"/>
</dbReference>
<dbReference type="Pfam" id="PF04055">
    <property type="entry name" value="Radical_SAM"/>
    <property type="match status" value="1"/>
</dbReference>
<dbReference type="Pfam" id="PF01938">
    <property type="entry name" value="TRAM"/>
    <property type="match status" value="1"/>
</dbReference>
<dbReference type="Pfam" id="PF00919">
    <property type="entry name" value="UPF0004"/>
    <property type="match status" value="1"/>
</dbReference>
<dbReference type="SFLD" id="SFLDF00273">
    <property type="entry name" value="(dimethylallyl)adenosine_tRNA"/>
    <property type="match status" value="1"/>
</dbReference>
<dbReference type="SFLD" id="SFLDG01082">
    <property type="entry name" value="B12-binding_domain_containing"/>
    <property type="match status" value="1"/>
</dbReference>
<dbReference type="SFLD" id="SFLDG01061">
    <property type="entry name" value="methylthiotransferase"/>
    <property type="match status" value="1"/>
</dbReference>
<dbReference type="SMART" id="SM00729">
    <property type="entry name" value="Elp3"/>
    <property type="match status" value="1"/>
</dbReference>
<dbReference type="SUPFAM" id="SSF102114">
    <property type="entry name" value="Radical SAM enzymes"/>
    <property type="match status" value="1"/>
</dbReference>
<dbReference type="PROSITE" id="PS51449">
    <property type="entry name" value="MTTASE_N"/>
    <property type="match status" value="1"/>
</dbReference>
<dbReference type="PROSITE" id="PS01278">
    <property type="entry name" value="MTTASE_RADICAL"/>
    <property type="match status" value="1"/>
</dbReference>
<dbReference type="PROSITE" id="PS51918">
    <property type="entry name" value="RADICAL_SAM"/>
    <property type="match status" value="1"/>
</dbReference>
<dbReference type="PROSITE" id="PS50926">
    <property type="entry name" value="TRAM"/>
    <property type="match status" value="1"/>
</dbReference>
<organism>
    <name type="scientific">Bacillus mycoides (strain KBAB4)</name>
    <name type="common">Bacillus weihenstephanensis</name>
    <dbReference type="NCBI Taxonomy" id="315730"/>
    <lineage>
        <taxon>Bacteria</taxon>
        <taxon>Bacillati</taxon>
        <taxon>Bacillota</taxon>
        <taxon>Bacilli</taxon>
        <taxon>Bacillales</taxon>
        <taxon>Bacillaceae</taxon>
        <taxon>Bacillus</taxon>
        <taxon>Bacillus cereus group</taxon>
    </lineage>
</organism>
<accession>A9VS16</accession>
<reference key="1">
    <citation type="journal article" date="2008" name="Chem. Biol. Interact.">
        <title>Extending the Bacillus cereus group genomics to putative food-borne pathogens of different toxicity.</title>
        <authorList>
            <person name="Lapidus A."/>
            <person name="Goltsman E."/>
            <person name="Auger S."/>
            <person name="Galleron N."/>
            <person name="Segurens B."/>
            <person name="Dossat C."/>
            <person name="Land M.L."/>
            <person name="Broussolle V."/>
            <person name="Brillard J."/>
            <person name="Guinebretiere M.-H."/>
            <person name="Sanchis V."/>
            <person name="Nguen-the C."/>
            <person name="Lereclus D."/>
            <person name="Richardson P."/>
            <person name="Wincker P."/>
            <person name="Weissenbach J."/>
            <person name="Ehrlich S.D."/>
            <person name="Sorokin A."/>
        </authorList>
    </citation>
    <scope>NUCLEOTIDE SEQUENCE [LARGE SCALE GENOMIC DNA]</scope>
    <source>
        <strain>KBAB4</strain>
    </source>
</reference>
<name>MIAB_BACMK</name>
<feature type="chain" id="PRO_0000374139" description="tRNA-2-methylthio-N(6)-dimethylallyladenosine synthase">
    <location>
        <begin position="1"/>
        <end position="509"/>
    </location>
</feature>
<feature type="domain" description="MTTase N-terminal" evidence="1">
    <location>
        <begin position="66"/>
        <end position="184"/>
    </location>
</feature>
<feature type="domain" description="Radical SAM core" evidence="2">
    <location>
        <begin position="207"/>
        <end position="437"/>
    </location>
</feature>
<feature type="domain" description="TRAM" evidence="1">
    <location>
        <begin position="440"/>
        <end position="503"/>
    </location>
</feature>
<feature type="region of interest" description="Disordered" evidence="3">
    <location>
        <begin position="1"/>
        <end position="25"/>
    </location>
</feature>
<feature type="compositionally biased region" description="Polar residues" evidence="3">
    <location>
        <begin position="1"/>
        <end position="15"/>
    </location>
</feature>
<feature type="compositionally biased region" description="Basic and acidic residues" evidence="3">
    <location>
        <begin position="16"/>
        <end position="25"/>
    </location>
</feature>
<feature type="binding site" evidence="1">
    <location>
        <position position="75"/>
    </location>
    <ligand>
        <name>[4Fe-4S] cluster</name>
        <dbReference type="ChEBI" id="CHEBI:49883"/>
        <label>1</label>
    </ligand>
</feature>
<feature type="binding site" evidence="1">
    <location>
        <position position="111"/>
    </location>
    <ligand>
        <name>[4Fe-4S] cluster</name>
        <dbReference type="ChEBI" id="CHEBI:49883"/>
        <label>1</label>
    </ligand>
</feature>
<feature type="binding site" evidence="1">
    <location>
        <position position="145"/>
    </location>
    <ligand>
        <name>[4Fe-4S] cluster</name>
        <dbReference type="ChEBI" id="CHEBI:49883"/>
        <label>1</label>
    </ligand>
</feature>
<feature type="binding site" evidence="1">
    <location>
        <position position="221"/>
    </location>
    <ligand>
        <name>[4Fe-4S] cluster</name>
        <dbReference type="ChEBI" id="CHEBI:49883"/>
        <label>2</label>
        <note>4Fe-4S-S-AdoMet</note>
    </ligand>
</feature>
<feature type="binding site" evidence="1">
    <location>
        <position position="225"/>
    </location>
    <ligand>
        <name>[4Fe-4S] cluster</name>
        <dbReference type="ChEBI" id="CHEBI:49883"/>
        <label>2</label>
        <note>4Fe-4S-S-AdoMet</note>
    </ligand>
</feature>
<feature type="binding site" evidence="1">
    <location>
        <position position="228"/>
    </location>
    <ligand>
        <name>[4Fe-4S] cluster</name>
        <dbReference type="ChEBI" id="CHEBI:49883"/>
        <label>2</label>
        <note>4Fe-4S-S-AdoMet</note>
    </ligand>
</feature>
<keyword id="KW-0004">4Fe-4S</keyword>
<keyword id="KW-0963">Cytoplasm</keyword>
<keyword id="KW-0408">Iron</keyword>
<keyword id="KW-0411">Iron-sulfur</keyword>
<keyword id="KW-0479">Metal-binding</keyword>
<keyword id="KW-0949">S-adenosyl-L-methionine</keyword>
<keyword id="KW-0808">Transferase</keyword>
<keyword id="KW-0819">tRNA processing</keyword>